<proteinExistence type="inferred from homology"/>
<name>DDL_GLOC7</name>
<reference key="1">
    <citation type="journal article" date="2011" name="MBio">
        <title>Novel metabolic attributes of the genus Cyanothece, comprising a group of unicellular nitrogen-fixing Cyanobacteria.</title>
        <authorList>
            <person name="Bandyopadhyay A."/>
            <person name="Elvitigala T."/>
            <person name="Welsh E."/>
            <person name="Stockel J."/>
            <person name="Liberton M."/>
            <person name="Min H."/>
            <person name="Sherman L.A."/>
            <person name="Pakrasi H.B."/>
        </authorList>
    </citation>
    <scope>NUCLEOTIDE SEQUENCE [LARGE SCALE GENOMIC DNA]</scope>
    <source>
        <strain>PCC 7424</strain>
    </source>
</reference>
<gene>
    <name evidence="2" type="primary">ddl</name>
    <name type="ordered locus">PCC7424_0104</name>
</gene>
<dbReference type="EC" id="6.3.2.4" evidence="2"/>
<dbReference type="EMBL" id="CP001291">
    <property type="protein sequence ID" value="ACK68574.1"/>
    <property type="molecule type" value="Genomic_DNA"/>
</dbReference>
<dbReference type="RefSeq" id="WP_012597525.1">
    <property type="nucleotide sequence ID" value="NC_011729.1"/>
</dbReference>
<dbReference type="SMR" id="B7K991"/>
<dbReference type="STRING" id="65393.PCC7424_0104"/>
<dbReference type="KEGG" id="cyc:PCC7424_0104"/>
<dbReference type="eggNOG" id="COG1181">
    <property type="taxonomic scope" value="Bacteria"/>
</dbReference>
<dbReference type="HOGENOM" id="CLU_039268_0_0_3"/>
<dbReference type="OrthoDB" id="9813261at2"/>
<dbReference type="UniPathway" id="UPA00219"/>
<dbReference type="Proteomes" id="UP000002384">
    <property type="component" value="Chromosome"/>
</dbReference>
<dbReference type="GO" id="GO:0005829">
    <property type="term" value="C:cytosol"/>
    <property type="evidence" value="ECO:0007669"/>
    <property type="project" value="TreeGrafter"/>
</dbReference>
<dbReference type="GO" id="GO:0005524">
    <property type="term" value="F:ATP binding"/>
    <property type="evidence" value="ECO:0007669"/>
    <property type="project" value="UniProtKB-KW"/>
</dbReference>
<dbReference type="GO" id="GO:0008716">
    <property type="term" value="F:D-alanine-D-alanine ligase activity"/>
    <property type="evidence" value="ECO:0007669"/>
    <property type="project" value="UniProtKB-UniRule"/>
</dbReference>
<dbReference type="GO" id="GO:0046872">
    <property type="term" value="F:metal ion binding"/>
    <property type="evidence" value="ECO:0007669"/>
    <property type="project" value="UniProtKB-KW"/>
</dbReference>
<dbReference type="GO" id="GO:0071555">
    <property type="term" value="P:cell wall organization"/>
    <property type="evidence" value="ECO:0007669"/>
    <property type="project" value="UniProtKB-KW"/>
</dbReference>
<dbReference type="GO" id="GO:0009252">
    <property type="term" value="P:peptidoglycan biosynthetic process"/>
    <property type="evidence" value="ECO:0007669"/>
    <property type="project" value="UniProtKB-UniRule"/>
</dbReference>
<dbReference type="GO" id="GO:0008360">
    <property type="term" value="P:regulation of cell shape"/>
    <property type="evidence" value="ECO:0007669"/>
    <property type="project" value="UniProtKB-KW"/>
</dbReference>
<dbReference type="FunFam" id="3.30.1490.20:FF:000007">
    <property type="entry name" value="D-alanine--D-alanine ligase"/>
    <property type="match status" value="1"/>
</dbReference>
<dbReference type="FunFam" id="3.30.470.20:FF:000008">
    <property type="entry name" value="D-alanine--D-alanine ligase"/>
    <property type="match status" value="1"/>
</dbReference>
<dbReference type="Gene3D" id="3.40.50.20">
    <property type="match status" value="1"/>
</dbReference>
<dbReference type="Gene3D" id="3.30.1490.20">
    <property type="entry name" value="ATP-grasp fold, A domain"/>
    <property type="match status" value="1"/>
</dbReference>
<dbReference type="Gene3D" id="3.30.470.20">
    <property type="entry name" value="ATP-grasp fold, B domain"/>
    <property type="match status" value="1"/>
</dbReference>
<dbReference type="HAMAP" id="MF_00047">
    <property type="entry name" value="Dala_Dala_lig"/>
    <property type="match status" value="1"/>
</dbReference>
<dbReference type="InterPro" id="IPR011761">
    <property type="entry name" value="ATP-grasp"/>
</dbReference>
<dbReference type="InterPro" id="IPR013815">
    <property type="entry name" value="ATP_grasp_subdomain_1"/>
</dbReference>
<dbReference type="InterPro" id="IPR000291">
    <property type="entry name" value="D-Ala_lig_Van_CS"/>
</dbReference>
<dbReference type="InterPro" id="IPR005905">
    <property type="entry name" value="D_ala_D_ala"/>
</dbReference>
<dbReference type="InterPro" id="IPR011095">
    <property type="entry name" value="Dala_Dala_lig_C"/>
</dbReference>
<dbReference type="InterPro" id="IPR011127">
    <property type="entry name" value="Dala_Dala_lig_N"/>
</dbReference>
<dbReference type="InterPro" id="IPR016185">
    <property type="entry name" value="PreATP-grasp_dom_sf"/>
</dbReference>
<dbReference type="NCBIfam" id="TIGR01205">
    <property type="entry name" value="D_ala_D_alaTIGR"/>
    <property type="match status" value="1"/>
</dbReference>
<dbReference type="NCBIfam" id="NF002378">
    <property type="entry name" value="PRK01372.1"/>
    <property type="match status" value="1"/>
</dbReference>
<dbReference type="NCBIfam" id="NF002528">
    <property type="entry name" value="PRK01966.1-4"/>
    <property type="match status" value="1"/>
</dbReference>
<dbReference type="PANTHER" id="PTHR23132">
    <property type="entry name" value="D-ALANINE--D-ALANINE LIGASE"/>
    <property type="match status" value="1"/>
</dbReference>
<dbReference type="PANTHER" id="PTHR23132:SF25">
    <property type="entry name" value="D-ALANINE--D-ALANINE LIGASE A"/>
    <property type="match status" value="1"/>
</dbReference>
<dbReference type="Pfam" id="PF07478">
    <property type="entry name" value="Dala_Dala_lig_C"/>
    <property type="match status" value="1"/>
</dbReference>
<dbReference type="Pfam" id="PF01820">
    <property type="entry name" value="Dala_Dala_lig_N"/>
    <property type="match status" value="1"/>
</dbReference>
<dbReference type="PIRSF" id="PIRSF039102">
    <property type="entry name" value="Ddl/VanB"/>
    <property type="match status" value="1"/>
</dbReference>
<dbReference type="SUPFAM" id="SSF56059">
    <property type="entry name" value="Glutathione synthetase ATP-binding domain-like"/>
    <property type="match status" value="1"/>
</dbReference>
<dbReference type="SUPFAM" id="SSF52440">
    <property type="entry name" value="PreATP-grasp domain"/>
    <property type="match status" value="1"/>
</dbReference>
<dbReference type="PROSITE" id="PS50975">
    <property type="entry name" value="ATP_GRASP"/>
    <property type="match status" value="1"/>
</dbReference>
<dbReference type="PROSITE" id="PS00843">
    <property type="entry name" value="DALA_DALA_LIGASE_1"/>
    <property type="match status" value="1"/>
</dbReference>
<dbReference type="PROSITE" id="PS00844">
    <property type="entry name" value="DALA_DALA_LIGASE_2"/>
    <property type="match status" value="1"/>
</dbReference>
<sequence length="352" mass="38498">MTKLRVGLLFGGRSGEHEVSINSAKAIATALSASENATKYDILPVYIRKDGCWQAPDVAQQVLESAQPLSTPTDKSPQLWQFPPQVNQVDVWFPILHGPNGEDGTLQGLLTLMQVPYVGSGVLGSAVGMDKITMKTVFAKAGLPQVKYMTLSRGQIWSNPCIFPKLCDEIEETLNYPCFVKPANLGSSVGIAKVRSRSELEKALDQAASYDRRIIVEAGVIAREVECAVLGNDNPKASVVGEITFNSDFYDYETKYTDGRAQLLIPASVPDSIMTQIQEMSLAAFAAVDAAGLARVDFFYVEKTGEILINEINTLPGFTAFSMYPQLWAATGISFPQLVDRLIELALERHQR</sequence>
<evidence type="ECO:0000250" key="1"/>
<evidence type="ECO:0000255" key="2">
    <source>
        <dbReference type="HAMAP-Rule" id="MF_00047"/>
    </source>
</evidence>
<protein>
    <recommendedName>
        <fullName evidence="2">D-alanine--D-alanine ligase</fullName>
        <ecNumber evidence="2">6.3.2.4</ecNumber>
    </recommendedName>
    <alternativeName>
        <fullName evidence="2">D-Ala-D-Ala ligase</fullName>
    </alternativeName>
    <alternativeName>
        <fullName evidence="2">D-alanylalanine synthetase</fullName>
    </alternativeName>
</protein>
<comment type="function">
    <text evidence="2">Cell wall formation.</text>
</comment>
<comment type="catalytic activity">
    <reaction evidence="2">
        <text>2 D-alanine + ATP = D-alanyl-D-alanine + ADP + phosphate + H(+)</text>
        <dbReference type="Rhea" id="RHEA:11224"/>
        <dbReference type="ChEBI" id="CHEBI:15378"/>
        <dbReference type="ChEBI" id="CHEBI:30616"/>
        <dbReference type="ChEBI" id="CHEBI:43474"/>
        <dbReference type="ChEBI" id="CHEBI:57416"/>
        <dbReference type="ChEBI" id="CHEBI:57822"/>
        <dbReference type="ChEBI" id="CHEBI:456216"/>
        <dbReference type="EC" id="6.3.2.4"/>
    </reaction>
</comment>
<comment type="cofactor">
    <cofactor evidence="1">
        <name>Mg(2+)</name>
        <dbReference type="ChEBI" id="CHEBI:18420"/>
    </cofactor>
    <cofactor evidence="1">
        <name>Mn(2+)</name>
        <dbReference type="ChEBI" id="CHEBI:29035"/>
    </cofactor>
    <text evidence="1">Binds 2 magnesium or manganese ions per subunit.</text>
</comment>
<comment type="pathway">
    <text evidence="2">Cell wall biogenesis; peptidoglycan biosynthesis.</text>
</comment>
<comment type="subcellular location">
    <subcellularLocation>
        <location evidence="2">Cytoplasm</location>
    </subcellularLocation>
</comment>
<comment type="similarity">
    <text evidence="2">Belongs to the D-alanine--D-alanine ligase family.</text>
</comment>
<organism>
    <name type="scientific">Gloeothece citriformis (strain PCC 7424)</name>
    <name type="common">Cyanothece sp. (strain PCC 7424)</name>
    <dbReference type="NCBI Taxonomy" id="65393"/>
    <lineage>
        <taxon>Bacteria</taxon>
        <taxon>Bacillati</taxon>
        <taxon>Cyanobacteriota</taxon>
        <taxon>Cyanophyceae</taxon>
        <taxon>Oscillatoriophycideae</taxon>
        <taxon>Chroococcales</taxon>
        <taxon>Aphanothecaceae</taxon>
        <taxon>Gloeothece</taxon>
        <taxon>Gloeothece citriformis</taxon>
    </lineage>
</organism>
<accession>B7K991</accession>
<feature type="chain" id="PRO_1000116636" description="D-alanine--D-alanine ligase">
    <location>
        <begin position="1"/>
        <end position="352"/>
    </location>
</feature>
<feature type="domain" description="ATP-grasp" evidence="2">
    <location>
        <begin position="135"/>
        <end position="344"/>
    </location>
</feature>
<feature type="binding site" evidence="2">
    <location>
        <begin position="171"/>
        <end position="226"/>
    </location>
    <ligand>
        <name>ATP</name>
        <dbReference type="ChEBI" id="CHEBI:30616"/>
    </ligand>
</feature>
<feature type="binding site" evidence="2">
    <location>
        <position position="297"/>
    </location>
    <ligand>
        <name>Mg(2+)</name>
        <dbReference type="ChEBI" id="CHEBI:18420"/>
        <label>1</label>
    </ligand>
</feature>
<feature type="binding site" evidence="2">
    <location>
        <position position="311"/>
    </location>
    <ligand>
        <name>Mg(2+)</name>
        <dbReference type="ChEBI" id="CHEBI:18420"/>
        <label>1</label>
    </ligand>
</feature>
<feature type="binding site" evidence="2">
    <location>
        <position position="311"/>
    </location>
    <ligand>
        <name>Mg(2+)</name>
        <dbReference type="ChEBI" id="CHEBI:18420"/>
        <label>2</label>
    </ligand>
</feature>
<feature type="binding site" evidence="2">
    <location>
        <position position="313"/>
    </location>
    <ligand>
        <name>Mg(2+)</name>
        <dbReference type="ChEBI" id="CHEBI:18420"/>
        <label>2</label>
    </ligand>
</feature>
<keyword id="KW-0067">ATP-binding</keyword>
<keyword id="KW-0133">Cell shape</keyword>
<keyword id="KW-0961">Cell wall biogenesis/degradation</keyword>
<keyword id="KW-0963">Cytoplasm</keyword>
<keyword id="KW-0436">Ligase</keyword>
<keyword id="KW-0460">Magnesium</keyword>
<keyword id="KW-0464">Manganese</keyword>
<keyword id="KW-0479">Metal-binding</keyword>
<keyword id="KW-0547">Nucleotide-binding</keyword>
<keyword id="KW-0573">Peptidoglycan synthesis</keyword>
<keyword id="KW-1185">Reference proteome</keyword>